<organismHost>
    <name type="scientific">Enterobacteriaceae</name>
    <dbReference type="NCBI Taxonomy" id="543"/>
</organismHost>
<reference key="1">
    <citation type="journal article" date="1986" name="Nucleic Acids Res.">
        <title>Localization and DNA sequence analysis of the C gene of bacteriophage Mu, the positive regulator of Mu late transcription.</title>
        <authorList>
            <person name="Margolin W."/>
            <person name="Howe M.M."/>
        </authorList>
    </citation>
    <scope>NUCLEOTIDE SEQUENCE [GENOMIC DNA]</scope>
</reference>
<reference key="2">
    <citation type="book" date="1987" name="Phage Mu">
        <title>Sequence of the left end of Mu.</title>
        <editorList>
            <person name="Symonds N."/>
            <person name="Toussaint A."/>
            <person name="van de Putte P."/>
            <person name="Howe M.M."/>
        </editorList>
        <authorList>
            <person name="Priess H."/>
            <person name="Brauer B."/>
            <person name="Schmidt C."/>
            <person name="Kamp D."/>
        </authorList>
    </citation>
    <scope>NUCLEOTIDE SEQUENCE [GENOMIC DNA]</scope>
</reference>
<reference key="3">
    <citation type="journal article" date="1986" name="Gene">
        <title>The sequence and mom-transactivation function of the C gene of bacteriophage Mu.</title>
        <authorList>
            <person name="Heisig P."/>
            <person name="Kahmann R."/>
        </authorList>
    </citation>
    <scope>NUCLEOTIDE SEQUENCE [GENOMIC DNA]</scope>
</reference>
<reference key="4">
    <citation type="journal article" date="2002" name="J. Mol. Biol.">
        <title>Bacteriophage Mu genome sequence: analysis and comparison with Mu-like prophages in Haemophilus, Neisseria and Deinococcus.</title>
        <authorList>
            <person name="Morgan G.J."/>
            <person name="Hatfull G.F."/>
            <person name="Casjens S."/>
            <person name="Hendrix R.W."/>
        </authorList>
    </citation>
    <scope>NUCLEOTIDE SEQUENCE [LARGE SCALE GENOMIC DNA]</scope>
</reference>
<reference key="5">
    <citation type="journal article" date="1988" name="Biochem. Pharmacol.">
        <title>The phage Mu 'late' gene transcription activator, C, is a site-specific DNA binding protein.</title>
        <authorList>
            <person name="Nagaraja V."/>
            <person name="Hecht G."/>
            <person name="Hattman S."/>
        </authorList>
    </citation>
    <scope>DNA-BINDING</scope>
</reference>
<reference key="6">
    <citation type="journal article" date="1989" name="J. Bacteriol.">
        <title>Localization and regulation of bacteriophage Mu promoters.</title>
        <authorList>
            <person name="Stoddard S.F."/>
            <person name="Howe M.M."/>
        </authorList>
    </citation>
    <scope>INDUCTION</scope>
</reference>
<reference key="7">
    <citation type="journal article" date="1997" name="J. Mol. Biol.">
        <title>Interaction of the bacteriophage Mu transcriptional activator protein, C, with its target site in the mom promoter.</title>
        <authorList>
            <person name="Sun W."/>
            <person name="Hattman S."/>
            <person name="Kool E."/>
        </authorList>
    </citation>
    <scope>FUNCTION</scope>
</reference>
<reference key="8">
    <citation type="journal article" date="2003" name="Proteins">
        <title>Identification of the domains for DNA binding and transactivation function of C protein from bacteriophage Mu.</title>
        <authorList>
            <person name="Paul B.D."/>
            <person name="Kanhere A."/>
            <person name="Chakraborty A."/>
            <person name="Bansal M."/>
            <person name="Nagaraja V."/>
        </authorList>
    </citation>
    <scope>DNA-BINDING</scope>
</reference>
<reference key="9">
    <citation type="journal article" date="2007" name="Protein Eng. Des. Sel.">
        <title>Bacteriophage Mu C protein is a new member of unusual leucine zipper-HTH class of proteins.</title>
        <authorList>
            <person name="Chakraborty A."/>
            <person name="Paul B.D."/>
            <person name="Nagaraja V."/>
        </authorList>
    </citation>
    <scope>DNA-BINDING</scope>
    <scope>MUTAGENESIS OF LEU-83 AND LEU-90</scope>
</reference>
<reference key="10">
    <citation type="journal article" date="2008" name="Nucleic Acids Res.">
        <title>Regional mutagenesis of the gene encoding the phage Mu late gene activator C identifies two separate regions important for DNA binding.</title>
        <authorList>
            <person name="Jiang Y."/>
            <person name="Howe M.M."/>
        </authorList>
    </citation>
    <scope>MUTAGENESIS OF SER-110; GLN-113; ILE-114 AND TYR-115</scope>
</reference>
<reference key="11">
    <citation type="journal article" date="2009" name="Biochemistry">
        <title>Conformational changes triggered by Mg2+ mediate transactivator function.</title>
        <authorList>
            <person name="Swapna G."/>
            <person name="Saravanan M."/>
            <person name="Nagaraja V."/>
        </authorList>
    </citation>
    <scope>COFACTOR</scope>
    <scope>MUTAGENESIS OF GLU-26; ASP-37 AND ASP-40</scope>
</reference>
<sequence>MQHDLFEHDPAIRQLIGHIDNIPAPELESRWPRSVVDLIDVLENELKRQNVSNPRELARKQAVALSCFLGGRQFYIPCGDTILTALRDDLLYCQFNGRNMEELRRQYRLSQPQIYQIIARQRKLHTRRHQPDLFSPETPK</sequence>
<gene>
    <name type="primary">C</name>
    <name type="ordered locus">Mup21</name>
</gene>
<organism>
    <name type="scientific">Escherichia phage Mu</name>
    <name type="common">Bacteriophage Mu</name>
    <dbReference type="NCBI Taxonomy" id="2681603"/>
    <lineage>
        <taxon>Viruses</taxon>
        <taxon>Duplodnaviria</taxon>
        <taxon>Heunggongvirae</taxon>
        <taxon>Uroviricota</taxon>
        <taxon>Caudoviricetes</taxon>
        <taxon>Muvirus</taxon>
        <taxon>Muvirus mu</taxon>
    </lineage>
</organism>
<comment type="function">
    <text evidence="6">Positive regulator of viral late genes transcription. Responsible for the transition from middle to late gene expression. Activates the Plys, PI, PP and Pmom late promoters thereby allowing the expression of viral endolysin and structural genes. Activates Pmom promoter by unwinding the DNA, thus realigning the promoter elements and recruiting the RNAP.</text>
</comment>
<comment type="cofactor">
    <cofactor evidence="8">
        <name>Mg(2+)</name>
        <dbReference type="ChEBI" id="CHEBI:18420"/>
    </cofactor>
    <text evidence="8">Binding magnesium induces a conformational change that allows DNA-binding.</text>
</comment>
<comment type="subunit">
    <text>Homodimer.</text>
</comment>
<comment type="subcellular location">
    <subcellularLocation>
        <location evidence="7">Host cytoplasm</location>
    </subcellularLocation>
</comment>
<comment type="induction">
    <text evidence="5">Expressed in the intermediate phase of the viral replicative cycle.</text>
</comment>
<comment type="domain">
    <text>The helix-turn-helix (HTH) motif is involved in DNA-binding. The leucine zipper (bZIP) domain is involved in dimerization.</text>
</comment>
<comment type="similarity">
    <text evidence="7">Belongs to the c/mor transcriptional regulatory family.</text>
</comment>
<proteinExistence type="evidence at protein level"/>
<dbReference type="EMBL" id="X03992">
    <property type="protein sequence ID" value="CAA27628.1"/>
    <property type="molecule type" value="Genomic_DNA"/>
</dbReference>
<dbReference type="EMBL" id="M64097">
    <property type="protein sequence ID" value="AAA32414.1"/>
    <property type="molecule type" value="Genomic_DNA"/>
</dbReference>
<dbReference type="EMBL" id="M13657">
    <property type="protein sequence ID" value="AAA32372.1"/>
    <property type="molecule type" value="Genomic_DNA"/>
</dbReference>
<dbReference type="EMBL" id="AF083977">
    <property type="protein sequence ID" value="AAF01098.1"/>
    <property type="molecule type" value="Genomic_DNA"/>
</dbReference>
<dbReference type="PIR" id="A91549">
    <property type="entry name" value="ZCBPU2"/>
</dbReference>
<dbReference type="RefSeq" id="NP_050625.1">
    <property type="nucleotide sequence ID" value="NC_000929.1"/>
</dbReference>
<dbReference type="SMR" id="P06022"/>
<dbReference type="GeneID" id="2636301"/>
<dbReference type="KEGG" id="vg:2636301"/>
<dbReference type="Proteomes" id="UP000002611">
    <property type="component" value="Genome"/>
</dbReference>
<dbReference type="Proteomes" id="UP000401936">
    <property type="component" value="Segment"/>
</dbReference>
<dbReference type="GO" id="GO:0030430">
    <property type="term" value="C:host cell cytoplasm"/>
    <property type="evidence" value="ECO:0007669"/>
    <property type="project" value="UniProtKB-SubCell"/>
</dbReference>
<dbReference type="GO" id="GO:0003677">
    <property type="term" value="F:DNA binding"/>
    <property type="evidence" value="ECO:0007669"/>
    <property type="project" value="UniProtKB-KW"/>
</dbReference>
<dbReference type="GO" id="GO:0046872">
    <property type="term" value="F:metal ion binding"/>
    <property type="evidence" value="ECO:0007669"/>
    <property type="project" value="UniProtKB-KW"/>
</dbReference>
<dbReference type="Gene3D" id="1.10.10.60">
    <property type="entry name" value="Homeodomain-like"/>
    <property type="match status" value="1"/>
</dbReference>
<dbReference type="InterPro" id="IPR052411">
    <property type="entry name" value="c-mor_Regulatory_Protein"/>
</dbReference>
<dbReference type="InterPro" id="IPR009057">
    <property type="entry name" value="Homeodomain-like_sf"/>
</dbReference>
<dbReference type="InterPro" id="IPR014875">
    <property type="entry name" value="Mor_transcription_activator"/>
</dbReference>
<dbReference type="PANTHER" id="PTHR37812">
    <property type="entry name" value="MU-LIKE PROPHAGE FLUMU PROTEIN C"/>
    <property type="match status" value="1"/>
</dbReference>
<dbReference type="PANTHER" id="PTHR37812:SF1">
    <property type="entry name" value="MU-LIKE PROPHAGE FLUMU PROTEIN C"/>
    <property type="match status" value="1"/>
</dbReference>
<dbReference type="Pfam" id="PF08765">
    <property type="entry name" value="Mor"/>
    <property type="match status" value="1"/>
</dbReference>
<dbReference type="SUPFAM" id="SSF46689">
    <property type="entry name" value="Homeodomain-like"/>
    <property type="match status" value="1"/>
</dbReference>
<keyword id="KW-0010">Activator</keyword>
<keyword id="KW-0238">DNA-binding</keyword>
<keyword id="KW-1035">Host cytoplasm</keyword>
<keyword id="KW-0460">Magnesium</keyword>
<keyword id="KW-0479">Metal-binding</keyword>
<keyword id="KW-1185">Reference proteome</keyword>
<keyword id="KW-0804">Transcription</keyword>
<keyword id="KW-0805">Transcription regulation</keyword>
<accession>P06022</accession>
<name>ACTC_BPMU</name>
<protein>
    <recommendedName>
        <fullName>Late transcription activator C</fullName>
        <shortName>C</shortName>
    </recommendedName>
    <alternativeName>
        <fullName>Gene product 21</fullName>
        <shortName>gp21</shortName>
    </alternativeName>
    <alternativeName>
        <fullName>Protein C</fullName>
    </alternativeName>
</protein>
<feature type="chain" id="PRO_0000062804" description="Late transcription activator C">
    <location>
        <begin position="1"/>
        <end position="140"/>
    </location>
</feature>
<feature type="domain" description="bZIP">
    <location>
        <begin position="69"/>
        <end position="90"/>
    </location>
</feature>
<feature type="DNA-binding region" description="H-T-H motif" evidence="1">
    <location>
        <begin position="99"/>
        <end position="119"/>
    </location>
</feature>
<feature type="binding site">
    <location>
        <position position="26"/>
    </location>
    <ligand>
        <name>Mg(2+)</name>
        <dbReference type="ChEBI" id="CHEBI:18420"/>
    </ligand>
</feature>
<feature type="binding site">
    <location>
        <position position="37"/>
    </location>
    <ligand>
        <name>Mg(2+)</name>
        <dbReference type="ChEBI" id="CHEBI:18420"/>
    </ligand>
</feature>
<feature type="binding site">
    <location>
        <position position="40"/>
    </location>
    <ligand>
        <name>Mg(2+)</name>
        <dbReference type="ChEBI" id="CHEBI:18420"/>
    </ligand>
</feature>
<feature type="mutagenesis site" description="Loss of DNA-binding activity and transactivation. No effect on dimerization." evidence="4">
    <original>E</original>
    <variation>D</variation>
    <location>
        <position position="26"/>
    </location>
</feature>
<feature type="mutagenesis site" description="Almost no effect on DNA-binding. No effect on transactivation and dimerization." evidence="4">
    <original>E</original>
    <variation>Q</variation>
    <location>
        <position position="26"/>
    </location>
</feature>
<feature type="mutagenesis site" description="Almost no effect on DNA-binding. No effect on transactivation and dimerization." evidence="4">
    <original>D</original>
    <variation>N</variation>
    <location>
        <position position="37"/>
    </location>
</feature>
<feature type="mutagenesis site" description="Loss of DNA-binding activity and transactivation. No effect on dimerization." evidence="4">
    <original>D</original>
    <variation>N</variation>
    <location>
        <position position="40"/>
    </location>
</feature>
<feature type="mutagenesis site" description="No effect on dimerization and DNA binding. Complete loss of dimerization and DNA-binding when associated with Ser-90." evidence="2">
    <original>L</original>
    <variation>R</variation>
    <location>
        <position position="83"/>
    </location>
</feature>
<feature type="mutagenesis site" description="No effect on dimerization and DNA binding. Complete loss of dimerization and DNA-binding when associated with Arg-83." evidence="2">
    <original>L</original>
    <variation>S</variation>
    <location>
        <position position="90"/>
    </location>
</feature>
<feature type="mutagenesis site" description="Loss of DNA-binding activity." evidence="3">
    <original>S</original>
    <variation>T</variation>
    <location>
        <position position="110"/>
    </location>
</feature>
<feature type="mutagenesis site" description="Loss of DNA-binding activity." evidence="3">
    <original>Q</original>
    <variation>P</variation>
    <location>
        <position position="113"/>
    </location>
</feature>
<feature type="mutagenesis site" description="Loss of DNA-binding activity." evidence="3">
    <original>I</original>
    <variation>N</variation>
    <location>
        <position position="114"/>
    </location>
</feature>
<feature type="mutagenesis site" description="Loss of DNA-binding activity." evidence="3">
    <original>Y</original>
    <variation>D</variation>
    <location>
        <position position="115"/>
    </location>
</feature>
<evidence type="ECO:0000250" key="1"/>
<evidence type="ECO:0000269" key="2">
    <source>
    </source>
</evidence>
<evidence type="ECO:0000269" key="3">
    <source>
    </source>
</evidence>
<evidence type="ECO:0000269" key="4">
    <source>
    </source>
</evidence>
<evidence type="ECO:0000269" key="5">
    <source>
    </source>
</evidence>
<evidence type="ECO:0000269" key="6">
    <source>
    </source>
</evidence>
<evidence type="ECO:0000305" key="7"/>
<evidence type="ECO:0000305" key="8">
    <source>
    </source>
</evidence>